<feature type="chain" id="PRO_0000112294" description="Carbamoyl phosphate synthase small chain">
    <location>
        <begin position="1"/>
        <end position="375"/>
    </location>
</feature>
<feature type="domain" description="Glutamine amidotransferase type-1" evidence="1">
    <location>
        <begin position="184"/>
        <end position="375"/>
    </location>
</feature>
<feature type="region of interest" description="CPSase" evidence="1">
    <location>
        <begin position="1"/>
        <end position="180"/>
    </location>
</feature>
<feature type="active site" description="Nucleophile" evidence="1">
    <location>
        <position position="260"/>
    </location>
</feature>
<feature type="active site" evidence="1">
    <location>
        <position position="350"/>
    </location>
</feature>
<feature type="active site" evidence="1">
    <location>
        <position position="352"/>
    </location>
</feature>
<feature type="binding site" evidence="1">
    <location>
        <position position="46"/>
    </location>
    <ligand>
        <name>L-glutamine</name>
        <dbReference type="ChEBI" id="CHEBI:58359"/>
    </ligand>
</feature>
<feature type="binding site" evidence="1">
    <location>
        <position position="232"/>
    </location>
    <ligand>
        <name>L-glutamine</name>
        <dbReference type="ChEBI" id="CHEBI:58359"/>
    </ligand>
</feature>
<feature type="binding site" evidence="1">
    <location>
        <position position="234"/>
    </location>
    <ligand>
        <name>L-glutamine</name>
        <dbReference type="ChEBI" id="CHEBI:58359"/>
    </ligand>
</feature>
<feature type="binding site" evidence="1">
    <location>
        <position position="261"/>
    </location>
    <ligand>
        <name>L-glutamine</name>
        <dbReference type="ChEBI" id="CHEBI:58359"/>
    </ligand>
</feature>
<feature type="binding site" evidence="1">
    <location>
        <position position="264"/>
    </location>
    <ligand>
        <name>L-glutamine</name>
        <dbReference type="ChEBI" id="CHEBI:58359"/>
    </ligand>
</feature>
<feature type="binding site" evidence="1">
    <location>
        <position position="302"/>
    </location>
    <ligand>
        <name>L-glutamine</name>
        <dbReference type="ChEBI" id="CHEBI:58359"/>
    </ligand>
</feature>
<feature type="binding site" evidence="1">
    <location>
        <position position="304"/>
    </location>
    <ligand>
        <name>L-glutamine</name>
        <dbReference type="ChEBI" id="CHEBI:58359"/>
    </ligand>
</feature>
<feature type="binding site" evidence="1">
    <location>
        <position position="305"/>
    </location>
    <ligand>
        <name>L-glutamine</name>
        <dbReference type="ChEBI" id="CHEBI:58359"/>
    </ligand>
</feature>
<dbReference type="EC" id="6.3.5.5" evidence="1"/>
<dbReference type="EMBL" id="AL583918">
    <property type="protein sequence ID" value="CAC30043.1"/>
    <property type="molecule type" value="Genomic_DNA"/>
</dbReference>
<dbReference type="PIR" id="G86975">
    <property type="entry name" value="G86975"/>
</dbReference>
<dbReference type="RefSeq" id="NP_301454.1">
    <property type="nucleotide sequence ID" value="NC_002677.1"/>
</dbReference>
<dbReference type="RefSeq" id="WP_010907778.1">
    <property type="nucleotide sequence ID" value="NC_002677.1"/>
</dbReference>
<dbReference type="SMR" id="Q9CCR3"/>
<dbReference type="STRING" id="272631.gene:17574356"/>
<dbReference type="KEGG" id="mle:ML0535"/>
<dbReference type="PATRIC" id="fig|272631.5.peg.936"/>
<dbReference type="Leproma" id="ML0535"/>
<dbReference type="eggNOG" id="COG0505">
    <property type="taxonomic scope" value="Bacteria"/>
</dbReference>
<dbReference type="HOGENOM" id="CLU_035901_2_1_11"/>
<dbReference type="OrthoDB" id="9804328at2"/>
<dbReference type="UniPathway" id="UPA00068">
    <property type="reaction ID" value="UER00171"/>
</dbReference>
<dbReference type="UniPathway" id="UPA00070">
    <property type="reaction ID" value="UER00115"/>
</dbReference>
<dbReference type="Proteomes" id="UP000000806">
    <property type="component" value="Chromosome"/>
</dbReference>
<dbReference type="GO" id="GO:0005524">
    <property type="term" value="F:ATP binding"/>
    <property type="evidence" value="ECO:0007669"/>
    <property type="project" value="UniProtKB-UniRule"/>
</dbReference>
<dbReference type="GO" id="GO:0004088">
    <property type="term" value="F:carbamoyl-phosphate synthase (glutamine-hydrolyzing) activity"/>
    <property type="evidence" value="ECO:0007669"/>
    <property type="project" value="UniProtKB-UniRule"/>
</dbReference>
<dbReference type="GO" id="GO:0004359">
    <property type="term" value="F:glutaminase activity"/>
    <property type="evidence" value="ECO:0007669"/>
    <property type="project" value="RHEA"/>
</dbReference>
<dbReference type="GO" id="GO:0006207">
    <property type="term" value="P:'de novo' pyrimidine nucleobase biosynthetic process"/>
    <property type="evidence" value="ECO:0007669"/>
    <property type="project" value="InterPro"/>
</dbReference>
<dbReference type="GO" id="GO:0044205">
    <property type="term" value="P:'de novo' UMP biosynthetic process"/>
    <property type="evidence" value="ECO:0007669"/>
    <property type="project" value="UniProtKB-UniRule"/>
</dbReference>
<dbReference type="GO" id="GO:0006541">
    <property type="term" value="P:glutamine metabolic process"/>
    <property type="evidence" value="ECO:0007669"/>
    <property type="project" value="InterPro"/>
</dbReference>
<dbReference type="GO" id="GO:0006526">
    <property type="term" value="P:L-arginine biosynthetic process"/>
    <property type="evidence" value="ECO:0007669"/>
    <property type="project" value="UniProtKB-UniRule"/>
</dbReference>
<dbReference type="CDD" id="cd01744">
    <property type="entry name" value="GATase1_CPSase"/>
    <property type="match status" value="1"/>
</dbReference>
<dbReference type="FunFam" id="3.40.50.880:FF:000018">
    <property type="entry name" value="Carbamoyl-phosphate synthase small chain"/>
    <property type="match status" value="1"/>
</dbReference>
<dbReference type="FunFam" id="3.50.30.20:FF:000001">
    <property type="entry name" value="Carbamoyl-phosphate synthase small chain"/>
    <property type="match status" value="1"/>
</dbReference>
<dbReference type="Gene3D" id="3.40.50.880">
    <property type="match status" value="1"/>
</dbReference>
<dbReference type="Gene3D" id="3.50.30.20">
    <property type="entry name" value="Carbamoyl-phosphate synthase small subunit, N-terminal domain"/>
    <property type="match status" value="1"/>
</dbReference>
<dbReference type="HAMAP" id="MF_01209">
    <property type="entry name" value="CPSase_S_chain"/>
    <property type="match status" value="1"/>
</dbReference>
<dbReference type="InterPro" id="IPR050472">
    <property type="entry name" value="Anth_synth/Amidotransfase"/>
</dbReference>
<dbReference type="InterPro" id="IPR006274">
    <property type="entry name" value="CarbamoylP_synth_ssu"/>
</dbReference>
<dbReference type="InterPro" id="IPR002474">
    <property type="entry name" value="CarbamoylP_synth_ssu_N"/>
</dbReference>
<dbReference type="InterPro" id="IPR036480">
    <property type="entry name" value="CarbP_synth_ssu_N_sf"/>
</dbReference>
<dbReference type="InterPro" id="IPR029062">
    <property type="entry name" value="Class_I_gatase-like"/>
</dbReference>
<dbReference type="InterPro" id="IPR035686">
    <property type="entry name" value="CPSase_GATase1"/>
</dbReference>
<dbReference type="InterPro" id="IPR017926">
    <property type="entry name" value="GATASE"/>
</dbReference>
<dbReference type="NCBIfam" id="TIGR01368">
    <property type="entry name" value="CPSaseIIsmall"/>
    <property type="match status" value="1"/>
</dbReference>
<dbReference type="NCBIfam" id="NF009475">
    <property type="entry name" value="PRK12838.1"/>
    <property type="match status" value="1"/>
</dbReference>
<dbReference type="PANTHER" id="PTHR43418:SF7">
    <property type="entry name" value="CARBAMOYL-PHOSPHATE SYNTHASE SMALL CHAIN"/>
    <property type="match status" value="1"/>
</dbReference>
<dbReference type="PANTHER" id="PTHR43418">
    <property type="entry name" value="MULTIFUNCTIONAL TRYPTOPHAN BIOSYNTHESIS PROTEIN-RELATED"/>
    <property type="match status" value="1"/>
</dbReference>
<dbReference type="Pfam" id="PF00988">
    <property type="entry name" value="CPSase_sm_chain"/>
    <property type="match status" value="1"/>
</dbReference>
<dbReference type="Pfam" id="PF00117">
    <property type="entry name" value="GATase"/>
    <property type="match status" value="1"/>
</dbReference>
<dbReference type="PRINTS" id="PR00097">
    <property type="entry name" value="ANTSNTHASEII"/>
</dbReference>
<dbReference type="PRINTS" id="PR00099">
    <property type="entry name" value="CPSGATASE"/>
</dbReference>
<dbReference type="PRINTS" id="PR00096">
    <property type="entry name" value="GATASE"/>
</dbReference>
<dbReference type="SMART" id="SM01097">
    <property type="entry name" value="CPSase_sm_chain"/>
    <property type="match status" value="1"/>
</dbReference>
<dbReference type="SUPFAM" id="SSF52021">
    <property type="entry name" value="Carbamoyl phosphate synthetase, small subunit N-terminal domain"/>
    <property type="match status" value="1"/>
</dbReference>
<dbReference type="SUPFAM" id="SSF52317">
    <property type="entry name" value="Class I glutamine amidotransferase-like"/>
    <property type="match status" value="1"/>
</dbReference>
<dbReference type="PROSITE" id="PS51273">
    <property type="entry name" value="GATASE_TYPE_1"/>
    <property type="match status" value="1"/>
</dbReference>
<gene>
    <name evidence="1" type="primary">carA</name>
    <name type="ordered locus">ML0535</name>
</gene>
<reference key="1">
    <citation type="journal article" date="2001" name="Nature">
        <title>Massive gene decay in the leprosy bacillus.</title>
        <authorList>
            <person name="Cole S.T."/>
            <person name="Eiglmeier K."/>
            <person name="Parkhill J."/>
            <person name="James K.D."/>
            <person name="Thomson N.R."/>
            <person name="Wheeler P.R."/>
            <person name="Honore N."/>
            <person name="Garnier T."/>
            <person name="Churcher C.M."/>
            <person name="Harris D.E."/>
            <person name="Mungall K.L."/>
            <person name="Basham D."/>
            <person name="Brown D."/>
            <person name="Chillingworth T."/>
            <person name="Connor R."/>
            <person name="Davies R.M."/>
            <person name="Devlin K."/>
            <person name="Duthoy S."/>
            <person name="Feltwell T."/>
            <person name="Fraser A."/>
            <person name="Hamlin N."/>
            <person name="Holroyd S."/>
            <person name="Hornsby T."/>
            <person name="Jagels K."/>
            <person name="Lacroix C."/>
            <person name="Maclean J."/>
            <person name="Moule S."/>
            <person name="Murphy L.D."/>
            <person name="Oliver K."/>
            <person name="Quail M.A."/>
            <person name="Rajandream M.A."/>
            <person name="Rutherford K.M."/>
            <person name="Rutter S."/>
            <person name="Seeger K."/>
            <person name="Simon S."/>
            <person name="Simmonds M."/>
            <person name="Skelton J."/>
            <person name="Squares R."/>
            <person name="Squares S."/>
            <person name="Stevens K."/>
            <person name="Taylor K."/>
            <person name="Whitehead S."/>
            <person name="Woodward J.R."/>
            <person name="Barrell B.G."/>
        </authorList>
    </citation>
    <scope>NUCLEOTIDE SEQUENCE [LARGE SCALE GENOMIC DNA]</scope>
    <source>
        <strain>TN</strain>
    </source>
</reference>
<organism>
    <name type="scientific">Mycobacterium leprae (strain TN)</name>
    <dbReference type="NCBI Taxonomy" id="272631"/>
    <lineage>
        <taxon>Bacteria</taxon>
        <taxon>Bacillati</taxon>
        <taxon>Actinomycetota</taxon>
        <taxon>Actinomycetes</taxon>
        <taxon>Mycobacteriales</taxon>
        <taxon>Mycobacteriaceae</taxon>
        <taxon>Mycobacterium</taxon>
    </lineage>
</organism>
<accession>Q9CCR3</accession>
<proteinExistence type="inferred from homology"/>
<protein>
    <recommendedName>
        <fullName evidence="1">Carbamoyl phosphate synthase small chain</fullName>
        <ecNumber evidence="1">6.3.5.5</ecNumber>
    </recommendedName>
    <alternativeName>
        <fullName evidence="1">Carbamoyl phosphate synthetase glutamine chain</fullName>
    </alternativeName>
</protein>
<comment type="function">
    <text evidence="1">Small subunit of the glutamine-dependent carbamoyl phosphate synthetase (CPSase). CPSase catalyzes the formation of carbamoyl phosphate from the ammonia moiety of glutamine, carbonate, and phosphate donated by ATP, constituting the first step of 2 biosynthetic pathways, one leading to arginine and/or urea and the other to pyrimidine nucleotides. The small subunit (glutamine amidotransferase) binds and cleaves glutamine to supply the large subunit with the substrate ammonia.</text>
</comment>
<comment type="catalytic activity">
    <reaction evidence="1">
        <text>hydrogencarbonate + L-glutamine + 2 ATP + H2O = carbamoyl phosphate + L-glutamate + 2 ADP + phosphate + 2 H(+)</text>
        <dbReference type="Rhea" id="RHEA:18633"/>
        <dbReference type="ChEBI" id="CHEBI:15377"/>
        <dbReference type="ChEBI" id="CHEBI:15378"/>
        <dbReference type="ChEBI" id="CHEBI:17544"/>
        <dbReference type="ChEBI" id="CHEBI:29985"/>
        <dbReference type="ChEBI" id="CHEBI:30616"/>
        <dbReference type="ChEBI" id="CHEBI:43474"/>
        <dbReference type="ChEBI" id="CHEBI:58228"/>
        <dbReference type="ChEBI" id="CHEBI:58359"/>
        <dbReference type="ChEBI" id="CHEBI:456216"/>
        <dbReference type="EC" id="6.3.5.5"/>
    </reaction>
</comment>
<comment type="catalytic activity">
    <molecule>Carbamoyl phosphate synthase small chain</molecule>
    <reaction evidence="1">
        <text>L-glutamine + H2O = L-glutamate + NH4(+)</text>
        <dbReference type="Rhea" id="RHEA:15889"/>
        <dbReference type="ChEBI" id="CHEBI:15377"/>
        <dbReference type="ChEBI" id="CHEBI:28938"/>
        <dbReference type="ChEBI" id="CHEBI:29985"/>
        <dbReference type="ChEBI" id="CHEBI:58359"/>
    </reaction>
</comment>
<comment type="pathway">
    <text evidence="1">Amino-acid biosynthesis; L-arginine biosynthesis; carbamoyl phosphate from bicarbonate: step 1/1.</text>
</comment>
<comment type="pathway">
    <text evidence="1">Pyrimidine metabolism; UMP biosynthesis via de novo pathway; (S)-dihydroorotate from bicarbonate: step 1/3.</text>
</comment>
<comment type="subunit">
    <text evidence="1">Composed of two chains; the small (or glutamine) chain promotes the hydrolysis of glutamine to ammonia, which is used by the large (or ammonia) chain to synthesize carbamoyl phosphate. Tetramer of heterodimers (alpha,beta)4.</text>
</comment>
<comment type="similarity">
    <text evidence="1">Belongs to the CarA family.</text>
</comment>
<sequence>MSKALLVLEDGRVFTGMPFGAIGQTLGEAVFSTGMSGYQETLTDPSYHRQIVVATAPQIGNTGWNDQDGESRDDRIWVAGYAVRDPSPCASNWRATGTLEDELVRQRIVGIAGIDTRAVVRHLRRYGSMKAGVFSGKAMIEPLNIEALVQHVRTQQSMLGADLVGEASTLDAYVVEPKGKERFTVAALDLGIKTNTPRNFARRGIRSYVLPASATFNQIADIKPHGLFLSNGPGDPATADHVVALTREVLNAGIPLFGICFGNQILGRALGLSTYKMVFGHRGINIPVIDHATGRVAVTAQNHGFALEGEAGQSFDTPFGSAVVSHTCANDGVVEGVKLADGRAFSVQYHPEAAAGPHDAEYLFDSFVELMAAQR</sequence>
<name>CARA_MYCLE</name>
<keyword id="KW-0028">Amino-acid biosynthesis</keyword>
<keyword id="KW-0055">Arginine biosynthesis</keyword>
<keyword id="KW-0067">ATP-binding</keyword>
<keyword id="KW-0315">Glutamine amidotransferase</keyword>
<keyword id="KW-0436">Ligase</keyword>
<keyword id="KW-0547">Nucleotide-binding</keyword>
<keyword id="KW-0665">Pyrimidine biosynthesis</keyword>
<keyword id="KW-1185">Reference proteome</keyword>
<evidence type="ECO:0000255" key="1">
    <source>
        <dbReference type="HAMAP-Rule" id="MF_01209"/>
    </source>
</evidence>